<sequence>MYEHYHSGWIECVTGSMFSGKSEELIRRVRRGLFAKQKVIVFKPSIDDRYSELEVVSHNGNKVEAVNVHHSSEILEHVKEAHDIIAIDEVQFFDNDIVGVATQLAEEGYRVIVAGLDMDFRGVPFEPVPELMAVSEHVTKLQAVCSVCGAPSSRTQRLIDGVPAKFDDPIILVGAKESYEPRCREHHVVPK</sequence>
<feature type="chain" id="PRO_1000122656" description="Thymidine kinase">
    <location>
        <begin position="1"/>
        <end position="191"/>
    </location>
</feature>
<feature type="active site" description="Proton acceptor" evidence="1">
    <location>
        <position position="89"/>
    </location>
</feature>
<feature type="binding site" evidence="1">
    <location>
        <begin position="15"/>
        <end position="22"/>
    </location>
    <ligand>
        <name>ATP</name>
        <dbReference type="ChEBI" id="CHEBI:30616"/>
    </ligand>
</feature>
<feature type="binding site" evidence="1">
    <location>
        <begin position="88"/>
        <end position="91"/>
    </location>
    <ligand>
        <name>ATP</name>
        <dbReference type="ChEBI" id="CHEBI:30616"/>
    </ligand>
</feature>
<feature type="binding site" evidence="1">
    <location>
        <position position="145"/>
    </location>
    <ligand>
        <name>Zn(2+)</name>
        <dbReference type="ChEBI" id="CHEBI:29105"/>
    </ligand>
</feature>
<feature type="binding site" evidence="1">
    <location>
        <position position="148"/>
    </location>
    <ligand>
        <name>Zn(2+)</name>
        <dbReference type="ChEBI" id="CHEBI:29105"/>
    </ligand>
</feature>
<feature type="binding site" evidence="1">
    <location>
        <position position="183"/>
    </location>
    <ligand>
        <name>Zn(2+)</name>
        <dbReference type="ChEBI" id="CHEBI:29105"/>
    </ligand>
</feature>
<feature type="binding site" evidence="1">
    <location>
        <position position="186"/>
    </location>
    <ligand>
        <name>Zn(2+)</name>
        <dbReference type="ChEBI" id="CHEBI:29105"/>
    </ligand>
</feature>
<proteinExistence type="inferred from homology"/>
<dbReference type="EC" id="2.7.1.21" evidence="1"/>
<dbReference type="EMBL" id="AP009484">
    <property type="protein sequence ID" value="BAH18480.1"/>
    <property type="molecule type" value="Genomic_DNA"/>
</dbReference>
<dbReference type="RefSeq" id="WP_015912272.1">
    <property type="nucleotide sequence ID" value="NC_011999.1"/>
</dbReference>
<dbReference type="SMR" id="B9E8G2"/>
<dbReference type="STRING" id="458233.MCCL_1773"/>
<dbReference type="GeneID" id="61130153"/>
<dbReference type="KEGG" id="mcl:MCCL_1773"/>
<dbReference type="eggNOG" id="COG1435">
    <property type="taxonomic scope" value="Bacteria"/>
</dbReference>
<dbReference type="HOGENOM" id="CLU_064400_3_0_9"/>
<dbReference type="OrthoDB" id="9781579at2"/>
<dbReference type="Proteomes" id="UP000001383">
    <property type="component" value="Chromosome"/>
</dbReference>
<dbReference type="GO" id="GO:0005829">
    <property type="term" value="C:cytosol"/>
    <property type="evidence" value="ECO:0007669"/>
    <property type="project" value="TreeGrafter"/>
</dbReference>
<dbReference type="GO" id="GO:0005524">
    <property type="term" value="F:ATP binding"/>
    <property type="evidence" value="ECO:0007669"/>
    <property type="project" value="UniProtKB-UniRule"/>
</dbReference>
<dbReference type="GO" id="GO:0004797">
    <property type="term" value="F:thymidine kinase activity"/>
    <property type="evidence" value="ECO:0007669"/>
    <property type="project" value="UniProtKB-UniRule"/>
</dbReference>
<dbReference type="GO" id="GO:0008270">
    <property type="term" value="F:zinc ion binding"/>
    <property type="evidence" value="ECO:0007669"/>
    <property type="project" value="UniProtKB-UniRule"/>
</dbReference>
<dbReference type="GO" id="GO:0071897">
    <property type="term" value="P:DNA biosynthetic process"/>
    <property type="evidence" value="ECO:0007669"/>
    <property type="project" value="UniProtKB-KW"/>
</dbReference>
<dbReference type="GO" id="GO:0046104">
    <property type="term" value="P:thymidine metabolic process"/>
    <property type="evidence" value="ECO:0007669"/>
    <property type="project" value="TreeGrafter"/>
</dbReference>
<dbReference type="FunFam" id="3.30.60.20:FF:000026">
    <property type="entry name" value="Thymidine kinase"/>
    <property type="match status" value="1"/>
</dbReference>
<dbReference type="FunFam" id="3.40.50.300:FF:000384">
    <property type="entry name" value="Thymidine kinase"/>
    <property type="match status" value="1"/>
</dbReference>
<dbReference type="Gene3D" id="3.30.60.20">
    <property type="match status" value="1"/>
</dbReference>
<dbReference type="Gene3D" id="3.40.50.300">
    <property type="entry name" value="P-loop containing nucleotide triphosphate hydrolases"/>
    <property type="match status" value="1"/>
</dbReference>
<dbReference type="HAMAP" id="MF_00124">
    <property type="entry name" value="Thymidine_kinase"/>
    <property type="match status" value="1"/>
</dbReference>
<dbReference type="InterPro" id="IPR027417">
    <property type="entry name" value="P-loop_NTPase"/>
</dbReference>
<dbReference type="InterPro" id="IPR001267">
    <property type="entry name" value="Thymidine_kinase"/>
</dbReference>
<dbReference type="InterPro" id="IPR020633">
    <property type="entry name" value="Thymidine_kinase_CS"/>
</dbReference>
<dbReference type="NCBIfam" id="NF003296">
    <property type="entry name" value="PRK04296.1-1"/>
    <property type="match status" value="1"/>
</dbReference>
<dbReference type="PANTHER" id="PTHR11441">
    <property type="entry name" value="THYMIDINE KINASE"/>
    <property type="match status" value="1"/>
</dbReference>
<dbReference type="PANTHER" id="PTHR11441:SF0">
    <property type="entry name" value="THYMIDINE KINASE, CYTOSOLIC"/>
    <property type="match status" value="1"/>
</dbReference>
<dbReference type="Pfam" id="PF00265">
    <property type="entry name" value="TK"/>
    <property type="match status" value="1"/>
</dbReference>
<dbReference type="PIRSF" id="PIRSF035805">
    <property type="entry name" value="TK_cell"/>
    <property type="match status" value="1"/>
</dbReference>
<dbReference type="SUPFAM" id="SSF57716">
    <property type="entry name" value="Glucocorticoid receptor-like (DNA-binding domain)"/>
    <property type="match status" value="1"/>
</dbReference>
<dbReference type="SUPFAM" id="SSF52540">
    <property type="entry name" value="P-loop containing nucleoside triphosphate hydrolases"/>
    <property type="match status" value="1"/>
</dbReference>
<dbReference type="PROSITE" id="PS00603">
    <property type="entry name" value="TK_CELLULAR_TYPE"/>
    <property type="match status" value="1"/>
</dbReference>
<reference key="1">
    <citation type="journal article" date="2009" name="J. Bacteriol.">
        <title>Complete genome sequence of Macrococcus caseolyticus strain JCSCS5402, reflecting the ancestral genome of the human-pathogenic staphylococci.</title>
        <authorList>
            <person name="Baba T."/>
            <person name="Kuwahara-Arai K."/>
            <person name="Uchiyama I."/>
            <person name="Takeuchi F."/>
            <person name="Ito T."/>
            <person name="Hiramatsu K."/>
        </authorList>
    </citation>
    <scope>NUCLEOTIDE SEQUENCE [LARGE SCALE GENOMIC DNA]</scope>
    <source>
        <strain>JCSC5402</strain>
    </source>
</reference>
<organism>
    <name type="scientific">Macrococcus caseolyticus (strain JCSC5402)</name>
    <name type="common">Macrococcoides caseolyticum</name>
    <dbReference type="NCBI Taxonomy" id="458233"/>
    <lineage>
        <taxon>Bacteria</taxon>
        <taxon>Bacillati</taxon>
        <taxon>Bacillota</taxon>
        <taxon>Bacilli</taxon>
        <taxon>Bacillales</taxon>
        <taxon>Staphylococcaceae</taxon>
        <taxon>Macrococcoides</taxon>
    </lineage>
</organism>
<gene>
    <name evidence="1" type="primary">tdk</name>
    <name type="ordered locus">MCCL_1773</name>
</gene>
<protein>
    <recommendedName>
        <fullName evidence="1">Thymidine kinase</fullName>
        <ecNumber evidence="1">2.7.1.21</ecNumber>
    </recommendedName>
</protein>
<keyword id="KW-0067">ATP-binding</keyword>
<keyword id="KW-0963">Cytoplasm</keyword>
<keyword id="KW-0237">DNA synthesis</keyword>
<keyword id="KW-0418">Kinase</keyword>
<keyword id="KW-0479">Metal-binding</keyword>
<keyword id="KW-0547">Nucleotide-binding</keyword>
<keyword id="KW-1185">Reference proteome</keyword>
<keyword id="KW-0808">Transferase</keyword>
<keyword id="KW-0862">Zinc</keyword>
<accession>B9E8G2</accession>
<name>KITH_MACCJ</name>
<comment type="catalytic activity">
    <reaction evidence="1">
        <text>thymidine + ATP = dTMP + ADP + H(+)</text>
        <dbReference type="Rhea" id="RHEA:19129"/>
        <dbReference type="ChEBI" id="CHEBI:15378"/>
        <dbReference type="ChEBI" id="CHEBI:17748"/>
        <dbReference type="ChEBI" id="CHEBI:30616"/>
        <dbReference type="ChEBI" id="CHEBI:63528"/>
        <dbReference type="ChEBI" id="CHEBI:456216"/>
        <dbReference type="EC" id="2.7.1.21"/>
    </reaction>
</comment>
<comment type="subunit">
    <text evidence="1">Homotetramer.</text>
</comment>
<comment type="subcellular location">
    <subcellularLocation>
        <location evidence="1">Cytoplasm</location>
    </subcellularLocation>
</comment>
<comment type="similarity">
    <text evidence="1">Belongs to the thymidine kinase family.</text>
</comment>
<evidence type="ECO:0000255" key="1">
    <source>
        <dbReference type="HAMAP-Rule" id="MF_00124"/>
    </source>
</evidence>